<proteinExistence type="inferred from homology"/>
<protein>
    <recommendedName>
        <fullName evidence="1">Photosystem II reaction center protein I</fullName>
        <shortName evidence="1">PSII-I</shortName>
    </recommendedName>
    <alternativeName>
        <fullName evidence="1">PSII 4.8 kDa protein</fullName>
    </alternativeName>
</protein>
<reference key="1">
    <citation type="journal article" date="2008" name="J. Phycol.">
        <title>Deep division in the Chlorophyceae (Chlorophyta) revealed by chloroplast phylogenomic analyseS.</title>
        <authorList>
            <person name="Turmel M."/>
            <person name="Brouard J.-S."/>
            <person name="Gagnon C."/>
            <person name="Otis C."/>
            <person name="Lemieux C."/>
        </authorList>
        <dbReference type="AGRICOLA" id="IND44059346"/>
    </citation>
    <scope>NUCLEOTIDE SEQUENCE [GENOMIC DNA]</scope>
    <source>
        <strain>SAG 575-1b / CCAP 575/1B / UTEX LB 40</strain>
    </source>
</reference>
<reference key="2">
    <citation type="journal article" date="2008" name="BMC Genomics">
        <title>Chloroplast DNA sequence of the green alga Oedogonium cardiacum (Chlorophyceae): unique genome architecture, derived characters shared with the Chaetophorales and novel genes acquired through horizontal transfer.</title>
        <authorList>
            <person name="Brouard J.-S."/>
            <person name="Otis C."/>
            <person name="Lemieux C."/>
            <person name="Turmel M."/>
        </authorList>
    </citation>
    <scope>NUCLEOTIDE SEQUENCE [LARGE SCALE GENOMIC DNA]</scope>
    <source>
        <strain>SAG 575-1b / CCAP 575/1B / UTEX LB 40</strain>
    </source>
</reference>
<name>PSBI_OEDCA</name>
<comment type="function">
    <text evidence="1">One of the components of the core complex of photosystem II (PSII), required for its stability and/or assembly. PSII is a light-driven water:plastoquinone oxidoreductase that uses light energy to abstract electrons from H(2)O, generating O(2) and a proton gradient subsequently used for ATP formation. It consists of a core antenna complex that captures photons, and an electron transfer chain that converts photonic excitation into a charge separation.</text>
</comment>
<comment type="subunit">
    <text evidence="1">PSII is composed of 1 copy each of membrane proteins PsbA, PsbB, PsbC, PsbD, PsbE, PsbF, PsbH, PsbI, PsbJ, PsbK, PsbL, PsbM, PsbT, PsbX, PsbY, PsbZ, Psb30/Ycf12, at least 3 peripheral proteins of the oxygen-evolving complex and a large number of cofactors. It forms dimeric complexes.</text>
</comment>
<comment type="subcellular location">
    <subcellularLocation>
        <location evidence="1">Plastid</location>
        <location evidence="1">Chloroplast thylakoid membrane</location>
        <topology evidence="1">Single-pass membrane protein</topology>
    </subcellularLocation>
</comment>
<comment type="similarity">
    <text evidence="1">Belongs to the PsbI family.</text>
</comment>
<dbReference type="EMBL" id="EF587347">
    <property type="protein sequence ID" value="ABU88186.1"/>
    <property type="molecule type" value="Genomic_DNA"/>
</dbReference>
<dbReference type="EMBL" id="EU677193">
    <property type="protein sequence ID" value="ACC97271.1"/>
    <property type="molecule type" value="Genomic_DNA"/>
</dbReference>
<dbReference type="RefSeq" id="YP_002000398.1">
    <property type="nucleotide sequence ID" value="NC_011031.1"/>
</dbReference>
<dbReference type="SMR" id="B2X1X3"/>
<dbReference type="GeneID" id="6440124"/>
<dbReference type="GO" id="GO:0009535">
    <property type="term" value="C:chloroplast thylakoid membrane"/>
    <property type="evidence" value="ECO:0007669"/>
    <property type="project" value="UniProtKB-SubCell"/>
</dbReference>
<dbReference type="GO" id="GO:0009539">
    <property type="term" value="C:photosystem II reaction center"/>
    <property type="evidence" value="ECO:0007669"/>
    <property type="project" value="InterPro"/>
</dbReference>
<dbReference type="GO" id="GO:0015979">
    <property type="term" value="P:photosynthesis"/>
    <property type="evidence" value="ECO:0007669"/>
    <property type="project" value="UniProtKB-UniRule"/>
</dbReference>
<dbReference type="HAMAP" id="MF_01316">
    <property type="entry name" value="PSII_PsbI"/>
    <property type="match status" value="1"/>
</dbReference>
<dbReference type="InterPro" id="IPR003686">
    <property type="entry name" value="PSII_PsbI"/>
</dbReference>
<dbReference type="InterPro" id="IPR037271">
    <property type="entry name" value="PSII_PsbI_sf"/>
</dbReference>
<dbReference type="NCBIfam" id="NF002735">
    <property type="entry name" value="PRK02655.1"/>
    <property type="match status" value="1"/>
</dbReference>
<dbReference type="PANTHER" id="PTHR35772">
    <property type="entry name" value="PHOTOSYSTEM II REACTION CENTER PROTEIN I"/>
    <property type="match status" value="1"/>
</dbReference>
<dbReference type="PANTHER" id="PTHR35772:SF1">
    <property type="entry name" value="PHOTOSYSTEM II REACTION CENTER PROTEIN I"/>
    <property type="match status" value="1"/>
</dbReference>
<dbReference type="Pfam" id="PF02532">
    <property type="entry name" value="PsbI"/>
    <property type="match status" value="1"/>
</dbReference>
<dbReference type="SUPFAM" id="SSF161041">
    <property type="entry name" value="Photosystem II reaction center protein I, PsbI"/>
    <property type="match status" value="1"/>
</dbReference>
<evidence type="ECO:0000255" key="1">
    <source>
        <dbReference type="HAMAP-Rule" id="MF_01316"/>
    </source>
</evidence>
<geneLocation type="chloroplast"/>
<accession>B2X1X3</accession>
<organism>
    <name type="scientific">Oedogonium cardiacum</name>
    <name type="common">Filamentous green alga</name>
    <dbReference type="NCBI Taxonomy" id="55995"/>
    <lineage>
        <taxon>Eukaryota</taxon>
        <taxon>Viridiplantae</taxon>
        <taxon>Chlorophyta</taxon>
        <taxon>core chlorophytes</taxon>
        <taxon>Chlorophyceae</taxon>
        <taxon>OCC clade</taxon>
        <taxon>Oedogoniales</taxon>
        <taxon>Oedogoniaceae</taxon>
        <taxon>Oedogonium</taxon>
    </lineage>
</organism>
<keyword id="KW-0150">Chloroplast</keyword>
<keyword id="KW-0472">Membrane</keyword>
<keyword id="KW-0602">Photosynthesis</keyword>
<keyword id="KW-0604">Photosystem II</keyword>
<keyword id="KW-0934">Plastid</keyword>
<keyword id="KW-0674">Reaction center</keyword>
<keyword id="KW-0793">Thylakoid</keyword>
<keyword id="KW-0812">Transmembrane</keyword>
<keyword id="KW-1133">Transmembrane helix</keyword>
<sequence length="37" mass="4256">MLTLKIFVYTVVTFFVSLFVFGFLSNDPGRNPGKRED</sequence>
<feature type="chain" id="PRO_0000353239" description="Photosystem II reaction center protein I">
    <location>
        <begin position="1"/>
        <end position="37"/>
    </location>
</feature>
<feature type="transmembrane region" description="Helical" evidence="1">
    <location>
        <begin position="4"/>
        <end position="24"/>
    </location>
</feature>
<gene>
    <name evidence="1" type="primary">psbI</name>
</gene>